<feature type="chain" id="PRO_0000364151" description="Eukaryotic translation initiation factor 3 subunit D-2">
    <location>
        <begin position="1"/>
        <end position="554"/>
    </location>
</feature>
<feature type="region of interest" description="RNA gate" evidence="1">
    <location>
        <begin position="291"/>
        <end position="305"/>
    </location>
</feature>
<feature type="region of interest" description="Disordered" evidence="3">
    <location>
        <begin position="530"/>
        <end position="554"/>
    </location>
</feature>
<dbReference type="EMBL" id="CH933806">
    <property type="protein sequence ID" value="EDW15991.1"/>
    <property type="molecule type" value="Genomic_DNA"/>
</dbReference>
<dbReference type="SMR" id="B4KDI2"/>
<dbReference type="FunCoup" id="B4KDI2">
    <property type="interactions" value="1829"/>
</dbReference>
<dbReference type="EnsemblMetazoa" id="FBtr0173192">
    <property type="protein sequence ID" value="FBpp0171684"/>
    <property type="gene ID" value="FBgn0145195"/>
</dbReference>
<dbReference type="EnsemblMetazoa" id="XM_002000494.4">
    <property type="protein sequence ID" value="XP_002000530.1"/>
    <property type="gene ID" value="LOC6574485"/>
</dbReference>
<dbReference type="EnsemblMetazoa" id="XM_044008041.1">
    <property type="protein sequence ID" value="XP_043863976.1"/>
    <property type="gene ID" value="LOC6574485"/>
</dbReference>
<dbReference type="GeneID" id="6574485"/>
<dbReference type="KEGG" id="dmo:Dmoj_GI22467"/>
<dbReference type="CTD" id="41475"/>
<dbReference type="eggNOG" id="KOG2479">
    <property type="taxonomic scope" value="Eukaryota"/>
</dbReference>
<dbReference type="HOGENOM" id="CLU_024521_2_0_1"/>
<dbReference type="InParanoid" id="B4KDI2"/>
<dbReference type="OMA" id="CKHNGVI"/>
<dbReference type="OrthoDB" id="16538at2759"/>
<dbReference type="PhylomeDB" id="B4KDI2"/>
<dbReference type="Proteomes" id="UP000009192">
    <property type="component" value="Unassembled WGS sequence"/>
</dbReference>
<dbReference type="GO" id="GO:0016282">
    <property type="term" value="C:eukaryotic 43S preinitiation complex"/>
    <property type="evidence" value="ECO:0007669"/>
    <property type="project" value="UniProtKB-UniRule"/>
</dbReference>
<dbReference type="GO" id="GO:0033290">
    <property type="term" value="C:eukaryotic 48S preinitiation complex"/>
    <property type="evidence" value="ECO:0007669"/>
    <property type="project" value="UniProtKB-UniRule"/>
</dbReference>
<dbReference type="GO" id="GO:0005852">
    <property type="term" value="C:eukaryotic translation initiation factor 3 complex"/>
    <property type="evidence" value="ECO:0000250"/>
    <property type="project" value="UniProtKB"/>
</dbReference>
<dbReference type="GO" id="GO:0098808">
    <property type="term" value="F:mRNA cap binding"/>
    <property type="evidence" value="ECO:0007669"/>
    <property type="project" value="UniProtKB-UniRule"/>
</dbReference>
<dbReference type="GO" id="GO:0003743">
    <property type="term" value="F:translation initiation factor activity"/>
    <property type="evidence" value="ECO:0000250"/>
    <property type="project" value="UniProtKB"/>
</dbReference>
<dbReference type="GO" id="GO:0002191">
    <property type="term" value="P:cap-dependent translational initiation"/>
    <property type="evidence" value="ECO:0007669"/>
    <property type="project" value="UniProtKB-UniRule"/>
</dbReference>
<dbReference type="GO" id="GO:0001732">
    <property type="term" value="P:formation of cytoplasmic translation initiation complex"/>
    <property type="evidence" value="ECO:0007669"/>
    <property type="project" value="UniProtKB-UniRule"/>
</dbReference>
<dbReference type="GO" id="GO:0006446">
    <property type="term" value="P:regulation of translational initiation"/>
    <property type="evidence" value="ECO:0000250"/>
    <property type="project" value="UniProtKB"/>
</dbReference>
<dbReference type="HAMAP" id="MF_03003">
    <property type="entry name" value="eIF3d"/>
    <property type="match status" value="1"/>
</dbReference>
<dbReference type="InterPro" id="IPR007783">
    <property type="entry name" value="eIF3d"/>
</dbReference>
<dbReference type="PANTHER" id="PTHR12399">
    <property type="entry name" value="EUKARYOTIC TRANSLATION INITIATION FACTOR 3 SUBUNIT 7"/>
    <property type="match status" value="1"/>
</dbReference>
<dbReference type="PANTHER" id="PTHR12399:SF0">
    <property type="entry name" value="EUKARYOTIC TRANSLATION INITIATION FACTOR 3 SUBUNIT D"/>
    <property type="match status" value="1"/>
</dbReference>
<dbReference type="Pfam" id="PF05091">
    <property type="entry name" value="eIF-3_zeta"/>
    <property type="match status" value="1"/>
</dbReference>
<dbReference type="PIRSF" id="PIRSF016281">
    <property type="entry name" value="EIF-3_zeta"/>
    <property type="match status" value="1"/>
</dbReference>
<accession>B4KDI2</accession>
<keyword id="KW-0963">Cytoplasm</keyword>
<keyword id="KW-0396">Initiation factor</keyword>
<keyword id="KW-0648">Protein biosynthesis</keyword>
<keyword id="KW-1185">Reference proteome</keyword>
<keyword id="KW-0694">RNA-binding</keyword>
<gene>
    <name evidence="2" type="primary">eIF3d2</name>
    <name evidence="2" type="synonym">eIF3-S7-2</name>
    <name type="ORF">GI22467</name>
</gene>
<organism>
    <name type="scientific">Drosophila mojavensis</name>
    <name type="common">Fruit fly</name>
    <dbReference type="NCBI Taxonomy" id="7230"/>
    <lineage>
        <taxon>Eukaryota</taxon>
        <taxon>Metazoa</taxon>
        <taxon>Ecdysozoa</taxon>
        <taxon>Arthropoda</taxon>
        <taxon>Hexapoda</taxon>
        <taxon>Insecta</taxon>
        <taxon>Pterygota</taxon>
        <taxon>Neoptera</taxon>
        <taxon>Endopterygota</taxon>
        <taxon>Diptera</taxon>
        <taxon>Brachycera</taxon>
        <taxon>Muscomorpha</taxon>
        <taxon>Ephydroidea</taxon>
        <taxon>Drosophilidae</taxon>
        <taxon>Drosophila</taxon>
    </lineage>
</organism>
<protein>
    <recommendedName>
        <fullName evidence="2">Eukaryotic translation initiation factor 3 subunit D-2</fullName>
        <shortName evidence="2">eIF3d-2</shortName>
    </recommendedName>
    <alternativeName>
        <fullName evidence="2">Eukaryotic translation initiation factor 3 subunit 7-2</fullName>
    </alternativeName>
</protein>
<proteinExistence type="inferred from homology"/>
<comment type="function">
    <text evidence="2">mRNA cap-binding component of the eukaryotic translation initiation factor 3 (eIF-3) complex, which is involved in protein synthesis of a specialized repertoire of mRNAs and, together with other initiation factors, stimulates binding of mRNA and methionyl-tRNAi to the 40S ribosome. The eIF-3 complex specifically targets and initiates translation of a subset of mRNAs involved in cell proliferation. In the eIF-3 complex, eif3d specifically recognizes and binds the 7-methylguanosine cap of a subset of mRNAs.</text>
</comment>
<comment type="subunit">
    <text evidence="2">Component of the eukaryotic translation initiation factor 3 (eIF-3) complex. The eIF-3 complex interacts with pix.</text>
</comment>
<comment type="subcellular location">
    <subcellularLocation>
        <location evidence="2">Cytoplasm</location>
    </subcellularLocation>
</comment>
<comment type="domain">
    <text evidence="2">The RNA gate region regulates mRNA cap recognition to prevent promiscuous mRNA-binding before assembly of eif3d into the full eukaryotic translation initiation factor 3 (eIF-3) complex.</text>
</comment>
<comment type="similarity">
    <text evidence="2">Belongs to the eIF-3 subunit D family.</text>
</comment>
<reference key="1">
    <citation type="journal article" date="2007" name="Nature">
        <title>Evolution of genes and genomes on the Drosophila phylogeny.</title>
        <authorList>
            <consortium name="Drosophila 12 genomes consortium"/>
        </authorList>
    </citation>
    <scope>NUCLEOTIDE SEQUENCE [LARGE SCALE GENOMIC DNA]</scope>
    <source>
        <strain>Tucson 15081-1352.22</strain>
    </source>
</reference>
<evidence type="ECO:0000250" key="1">
    <source>
        <dbReference type="UniProtKB" id="K7IM66"/>
    </source>
</evidence>
<evidence type="ECO:0000255" key="2">
    <source>
        <dbReference type="HAMAP-Rule" id="MF_03003"/>
    </source>
</evidence>
<evidence type="ECO:0000256" key="3">
    <source>
        <dbReference type="SAM" id="MobiDB-lite"/>
    </source>
</evidence>
<name>EI3D2_DROMO</name>
<sequence length="554" mass="62841">MSHYAPFIKPYIEYNQFGWGPCDVSDMEVPYQPFCKSDRLGKISDWMLPVQDKKYTNKYASTFGSNNSQYAYFHEDDDATFHLVDGGNPRALKPYQRNRYRPNQRNNVRLHGRYVRGNAMIGVGQGGIGGSGGAGAGNKYGKGRDMRRGYAGRRFMRNAPVRLRESSVLVRSDWVSIEEIDFPRLLKLSLPNIKDGIDIVTCGALEYYDKQCDRINVKNERPLQKVDRIINVPGTIDDPVIRRLSKTMGNVFATDDIIATLMCCTRSNYSWDIVIEKLGTKVFLDKRDNAQFDLLTVNETALEPPQDSEGSINSPQSLSLEATLINHNFSQQVLKIGDQEPKHKFEEPNPFEEPGVELASVAYRYKQWQLGDDVVLIARCKHNGVIKSPSGELQFVSIKALNEWDSKAANSVEWRQKLDSQRGAVLASELRNNACKLAKWTVEAVLAGSDQLKLGYVSRVNRNDHLRHVILGLQQFKPQEFATQINLNMDNAWGVLRCLVDIVLKQPDGKYLIMKDPNKPMIRLYDIPENAFDSDGNEDEETSEDRPFLKSMAN</sequence>